<gene>
    <name type="primary">lcnA</name>
</gene>
<comment type="function">
    <text>Inhibits a wide spectrum of lactic acid bacteria.</text>
</comment>
<comment type="subcellular location">
    <subcellularLocation>
        <location>Secreted</location>
    </subcellularLocation>
</comment>
<comment type="similarity">
    <text evidence="2">Belongs to the bacteriocin class IIA/YGNGV family.</text>
</comment>
<reference key="1">
    <citation type="journal article" date="1991" name="J. Bacteriol.">
        <title>Characterization of leucocin A-UAL 187 and cloning of the bacteriocin gene from Leuconostoc gelidum.</title>
        <authorList>
            <person name="Hastings J.W."/>
            <person name="Sailer M."/>
            <person name="Johnson K."/>
            <person name="Roy K.L."/>
            <person name="Vederas J.C."/>
            <person name="Stiles M.E."/>
        </authorList>
    </citation>
    <scope>NUCLEOTIDE SEQUENCE [GENOMIC DNA]</scope>
    <scope>PROTEIN SEQUENCE OF 25-37</scope>
    <source>
        <strain>UAL 187</strain>
    </source>
</reference>
<reference key="2">
    <citation type="journal article" date="1993" name="Biochemistry">
        <title>15N- and 13C-labeled media from Anabaena sp. for universal isotopic labeling of bacteriocins: NMR resonance assignments of leucocin A from Leuconostoc gelidum and nisin A from Lactococcus lactis.</title>
        <authorList>
            <person name="Sailer M."/>
            <person name="Helms G.L."/>
            <person name="Henkel T."/>
            <person name="Niemczura W.P."/>
            <person name="Stiles M.E."/>
            <person name="Vederas J.C."/>
        </authorList>
    </citation>
    <scope>STRUCTURE BY NMR</scope>
    <source>
        <strain>UAL 187</strain>
    </source>
</reference>
<reference key="3">
    <citation type="journal article" date="1997" name="Biochemistry">
        <title>Three-dimensional structure of leucocin A in trifluoroethanol and dodecylphosphocholine micelles: spatial location of residues critical for biological activity in type IIa bacteriocins from lactic acid bacteria.</title>
        <authorList>
            <person name="Gallagher N.L.F."/>
            <person name="Sailer M."/>
            <person name="Niemczura W.P."/>
            <person name="Nakashima T.T."/>
            <person name="Stiles M.E."/>
            <person name="Vederas J.C."/>
        </authorList>
    </citation>
    <scope>STRUCTURE BY NMR</scope>
</reference>
<accession>P34034</accession>
<name>LCCA_LEUGE</name>
<dbReference type="EMBL" id="M64371">
    <property type="protein sequence ID" value="AAA68003.1"/>
    <property type="molecule type" value="Genomic_DNA"/>
</dbReference>
<dbReference type="PIR" id="A41657">
    <property type="entry name" value="A41657"/>
</dbReference>
<dbReference type="PDB" id="1CW6">
    <property type="method" value="NMR"/>
    <property type="chains" value="A=25-61"/>
</dbReference>
<dbReference type="PDB" id="2LEU">
    <property type="method" value="NMR"/>
    <property type="chains" value="A=25-61"/>
</dbReference>
<dbReference type="PDB" id="2LJQ">
    <property type="method" value="NMR"/>
    <property type="chains" value="A=25-61"/>
</dbReference>
<dbReference type="PDB" id="2LJT">
    <property type="method" value="NMR"/>
    <property type="chains" value="A=25-61"/>
</dbReference>
<dbReference type="PDB" id="3LEU">
    <property type="method" value="NMR"/>
    <property type="chains" value="A=25-61"/>
</dbReference>
<dbReference type="PDBsum" id="1CW6"/>
<dbReference type="PDBsum" id="2LEU"/>
<dbReference type="PDBsum" id="2LJQ"/>
<dbReference type="PDBsum" id="2LJT"/>
<dbReference type="PDBsum" id="3LEU"/>
<dbReference type="SMR" id="P34034"/>
<dbReference type="TCDB" id="1.C.24.1.6">
    <property type="family name" value="the pediocin (pediocin) family"/>
</dbReference>
<dbReference type="EvolutionaryTrace" id="P34034"/>
<dbReference type="GO" id="GO:0005576">
    <property type="term" value="C:extracellular region"/>
    <property type="evidence" value="ECO:0007669"/>
    <property type="project" value="UniProtKB-SubCell"/>
</dbReference>
<dbReference type="GO" id="GO:0042742">
    <property type="term" value="P:defense response to bacterium"/>
    <property type="evidence" value="ECO:0007669"/>
    <property type="project" value="UniProtKB-KW"/>
</dbReference>
<dbReference type="GO" id="GO:0031640">
    <property type="term" value="P:killing of cells of another organism"/>
    <property type="evidence" value="ECO:0007669"/>
    <property type="project" value="UniProtKB-KW"/>
</dbReference>
<dbReference type="Gene3D" id="1.20.5.130">
    <property type="match status" value="1"/>
</dbReference>
<dbReference type="InterPro" id="IPR002633">
    <property type="entry name" value="Bacteriocin_IIa"/>
</dbReference>
<dbReference type="InterPro" id="IPR023384">
    <property type="entry name" value="Bacteriocin_IIa_CS"/>
</dbReference>
<dbReference type="InterPro" id="IPR023388">
    <property type="entry name" value="Bacteriocin_IIa_dom_sf"/>
</dbReference>
<dbReference type="Pfam" id="PF01721">
    <property type="entry name" value="Bacteriocin_II"/>
    <property type="match status" value="1"/>
</dbReference>
<dbReference type="PROSITE" id="PS60030">
    <property type="entry name" value="BACTERIOCIN_IIA"/>
    <property type="match status" value="1"/>
</dbReference>
<evidence type="ECO:0000269" key="1">
    <source>
    </source>
</evidence>
<evidence type="ECO:0000305" key="2"/>
<evidence type="ECO:0007829" key="3">
    <source>
        <dbReference type="PDB" id="1CW6"/>
    </source>
</evidence>
<sequence>MMNMKPTESYEQLDNSALEQVVGGKYYGNGVHCTKSGCSVNWGEAFSAGVHRLANGGNGFW</sequence>
<geneLocation type="plasmid">
    <name>pLG7.6</name>
</geneLocation>
<keyword id="KW-0002">3D-structure</keyword>
<keyword id="KW-0044">Antibiotic</keyword>
<keyword id="KW-0929">Antimicrobial</keyword>
<keyword id="KW-0078">Bacteriocin</keyword>
<keyword id="KW-0903">Direct protein sequencing</keyword>
<keyword id="KW-1015">Disulfide bond</keyword>
<keyword id="KW-0614">Plasmid</keyword>
<keyword id="KW-0964">Secreted</keyword>
<feature type="propeptide" id="PRO_0000002742" evidence="1">
    <location>
        <begin position="1"/>
        <end position="24"/>
    </location>
</feature>
<feature type="chain" id="PRO_0000002743" description="Bacteriocin leucocin-A">
    <location>
        <begin position="25"/>
        <end position="61"/>
    </location>
</feature>
<feature type="disulfide bond">
    <location>
        <begin position="33"/>
        <end position="38"/>
    </location>
</feature>
<feature type="strand" evidence="3">
    <location>
        <begin position="28"/>
        <end position="30"/>
    </location>
</feature>
<feature type="strand" evidence="3">
    <location>
        <begin position="32"/>
        <end position="34"/>
    </location>
</feature>
<feature type="strand" evidence="3">
    <location>
        <begin position="37"/>
        <end position="39"/>
    </location>
</feature>
<feature type="helix" evidence="3">
    <location>
        <begin position="43"/>
        <end position="53"/>
    </location>
</feature>
<feature type="strand" evidence="3">
    <location>
        <begin position="57"/>
        <end position="59"/>
    </location>
</feature>
<proteinExistence type="evidence at protein level"/>
<organism>
    <name type="scientific">Leuconostoc gelidum</name>
    <dbReference type="NCBI Taxonomy" id="1244"/>
    <lineage>
        <taxon>Bacteria</taxon>
        <taxon>Bacillati</taxon>
        <taxon>Bacillota</taxon>
        <taxon>Bacilli</taxon>
        <taxon>Lactobacillales</taxon>
        <taxon>Lactobacillaceae</taxon>
        <taxon>Leuconostoc</taxon>
        <taxon>Leuconostoc gelidum group</taxon>
    </lineage>
</organism>
<protein>
    <recommendedName>
        <fullName>Bacteriocin leucocin-A</fullName>
    </recommendedName>
    <alternativeName>
        <fullName>Leucocin A-UAL 187</fullName>
        <shortName>Leu A</shortName>
    </alternativeName>
</protein>